<name>5DNU_VIBVY</name>
<feature type="chain" id="PRO_0000095064" description="5'-deoxynucleotidase VV1113">
    <location>
        <begin position="1"/>
        <end position="194"/>
    </location>
</feature>
<feature type="domain" description="HD" evidence="2">
    <location>
        <begin position="30"/>
        <end position="142"/>
    </location>
</feature>
<feature type="binding site" evidence="1">
    <location>
        <begin position="18"/>
        <end position="19"/>
    </location>
    <ligand>
        <name>substrate</name>
    </ligand>
</feature>
<feature type="binding site" evidence="1">
    <location>
        <position position="33"/>
    </location>
    <ligand>
        <name>a divalent metal cation</name>
        <dbReference type="ChEBI" id="CHEBI:60240"/>
    </ligand>
</feature>
<feature type="binding site" evidence="1">
    <location>
        <position position="33"/>
    </location>
    <ligand>
        <name>substrate</name>
    </ligand>
</feature>
<feature type="binding site" evidence="1">
    <location>
        <position position="68"/>
    </location>
    <ligand>
        <name>a divalent metal cation</name>
        <dbReference type="ChEBI" id="CHEBI:60240"/>
    </ligand>
</feature>
<feature type="binding site" evidence="1">
    <location>
        <position position="69"/>
    </location>
    <ligand>
        <name>a divalent metal cation</name>
        <dbReference type="ChEBI" id="CHEBI:60240"/>
    </ligand>
</feature>
<feature type="binding site" evidence="1">
    <location>
        <position position="69"/>
    </location>
    <ligand>
        <name>substrate</name>
    </ligand>
</feature>
<feature type="binding site" evidence="1">
    <location>
        <begin position="77"/>
        <end position="80"/>
    </location>
    <ligand>
        <name>substrate</name>
    </ligand>
</feature>
<feature type="binding site" evidence="1">
    <location>
        <position position="137"/>
    </location>
    <ligand>
        <name>a divalent metal cation</name>
        <dbReference type="ChEBI" id="CHEBI:60240"/>
    </ligand>
</feature>
<feature type="binding site" evidence="1">
    <location>
        <position position="137"/>
    </location>
    <ligand>
        <name>substrate</name>
    </ligand>
</feature>
<feature type="site" description="Appears to be important in orienting the phosphate for catalysis" evidence="1">
    <location>
        <position position="18"/>
    </location>
</feature>
<organism>
    <name type="scientific">Vibrio vulnificus (strain YJ016)</name>
    <dbReference type="NCBI Taxonomy" id="196600"/>
    <lineage>
        <taxon>Bacteria</taxon>
        <taxon>Pseudomonadati</taxon>
        <taxon>Pseudomonadota</taxon>
        <taxon>Gammaproteobacteria</taxon>
        <taxon>Vibrionales</taxon>
        <taxon>Vibrionaceae</taxon>
        <taxon>Vibrio</taxon>
    </lineage>
</organism>
<gene>
    <name type="ordered locus">VV1113</name>
</gene>
<reference key="1">
    <citation type="journal article" date="2003" name="Genome Res.">
        <title>Comparative genome analysis of Vibrio vulnificus, a marine pathogen.</title>
        <authorList>
            <person name="Chen C.-Y."/>
            <person name="Wu K.-M."/>
            <person name="Chang Y.-C."/>
            <person name="Chang C.-H."/>
            <person name="Tsai H.-C."/>
            <person name="Liao T.-L."/>
            <person name="Liu Y.-M."/>
            <person name="Chen H.-J."/>
            <person name="Shen A.B.-T."/>
            <person name="Li J.-C."/>
            <person name="Su T.-L."/>
            <person name="Shao C.-P."/>
            <person name="Lee C.-T."/>
            <person name="Hor L.-I."/>
            <person name="Tsai S.-F."/>
        </authorList>
    </citation>
    <scope>NUCLEOTIDE SEQUENCE [LARGE SCALE GENOMIC DNA]</scope>
    <source>
        <strain>YJ016</strain>
    </source>
</reference>
<proteinExistence type="inferred from homology"/>
<dbReference type="EC" id="3.1.3.89" evidence="1"/>
<dbReference type="EMBL" id="BA000037">
    <property type="protein sequence ID" value="BAC93877.1"/>
    <property type="status" value="ALT_INIT"/>
    <property type="molecule type" value="Genomic_DNA"/>
</dbReference>
<dbReference type="SMR" id="Q7MMF9"/>
<dbReference type="STRING" id="672.VV93_v1c10340"/>
<dbReference type="KEGG" id="vvy:VV1113"/>
<dbReference type="eggNOG" id="COG1896">
    <property type="taxonomic scope" value="Bacteria"/>
</dbReference>
<dbReference type="HOGENOM" id="CLU_084784_0_0_6"/>
<dbReference type="Proteomes" id="UP000002675">
    <property type="component" value="Chromosome I"/>
</dbReference>
<dbReference type="GO" id="GO:0005737">
    <property type="term" value="C:cytoplasm"/>
    <property type="evidence" value="ECO:0007669"/>
    <property type="project" value="UniProtKB-SubCell"/>
</dbReference>
<dbReference type="GO" id="GO:0002953">
    <property type="term" value="F:5'-deoxynucleotidase activity"/>
    <property type="evidence" value="ECO:0007669"/>
    <property type="project" value="UniProtKB-EC"/>
</dbReference>
<dbReference type="GO" id="GO:0046872">
    <property type="term" value="F:metal ion binding"/>
    <property type="evidence" value="ECO:0007669"/>
    <property type="project" value="UniProtKB-KW"/>
</dbReference>
<dbReference type="GO" id="GO:0000166">
    <property type="term" value="F:nucleotide binding"/>
    <property type="evidence" value="ECO:0007669"/>
    <property type="project" value="UniProtKB-KW"/>
</dbReference>
<dbReference type="CDD" id="cd00077">
    <property type="entry name" value="HDc"/>
    <property type="match status" value="1"/>
</dbReference>
<dbReference type="FunFam" id="1.10.3210.10:FF:000002">
    <property type="entry name" value="Nucleotidase YfbR"/>
    <property type="match status" value="1"/>
</dbReference>
<dbReference type="Gene3D" id="1.10.3210.10">
    <property type="entry name" value="Hypothetical protein af1432"/>
    <property type="match status" value="1"/>
</dbReference>
<dbReference type="HAMAP" id="MF_01100">
    <property type="entry name" value="5DNU"/>
    <property type="match status" value="1"/>
</dbReference>
<dbReference type="InterPro" id="IPR003607">
    <property type="entry name" value="HD/PDEase_dom"/>
</dbReference>
<dbReference type="InterPro" id="IPR006674">
    <property type="entry name" value="HD_domain"/>
</dbReference>
<dbReference type="InterPro" id="IPR022971">
    <property type="entry name" value="YfbR"/>
</dbReference>
<dbReference type="InterPro" id="IPR039356">
    <property type="entry name" value="YfbR/HDDC2"/>
</dbReference>
<dbReference type="NCBIfam" id="NF003009">
    <property type="entry name" value="PRK03826.1"/>
    <property type="match status" value="1"/>
</dbReference>
<dbReference type="PANTHER" id="PTHR11845">
    <property type="entry name" value="5'-DEOXYNUCLEOTIDASE HDDC2"/>
    <property type="match status" value="1"/>
</dbReference>
<dbReference type="PANTHER" id="PTHR11845:SF13">
    <property type="entry name" value="5'-DEOXYNUCLEOTIDASE HDDC2"/>
    <property type="match status" value="1"/>
</dbReference>
<dbReference type="Pfam" id="PF12917">
    <property type="entry name" value="YfbR-like"/>
    <property type="match status" value="1"/>
</dbReference>
<dbReference type="SMART" id="SM00471">
    <property type="entry name" value="HDc"/>
    <property type="match status" value="1"/>
</dbReference>
<dbReference type="SUPFAM" id="SSF109604">
    <property type="entry name" value="HD-domain/PDEase-like"/>
    <property type="match status" value="1"/>
</dbReference>
<dbReference type="PROSITE" id="PS51831">
    <property type="entry name" value="HD"/>
    <property type="match status" value="1"/>
</dbReference>
<comment type="function">
    <text evidence="1">Catalyzes the strictly specific dephosphorylation of 2'-deoxyribonucleoside 5'-monophosphates.</text>
</comment>
<comment type="catalytic activity">
    <reaction evidence="1">
        <text>a 2'-deoxyribonucleoside 5'-phosphate + H2O = a 2'-deoxyribonucleoside + phosphate</text>
        <dbReference type="Rhea" id="RHEA:36167"/>
        <dbReference type="ChEBI" id="CHEBI:15377"/>
        <dbReference type="ChEBI" id="CHEBI:18274"/>
        <dbReference type="ChEBI" id="CHEBI:43474"/>
        <dbReference type="ChEBI" id="CHEBI:65317"/>
        <dbReference type="EC" id="3.1.3.89"/>
    </reaction>
</comment>
<comment type="cofactor">
    <cofactor evidence="1">
        <name>a divalent metal cation</name>
        <dbReference type="ChEBI" id="CHEBI:60240"/>
    </cofactor>
</comment>
<comment type="subunit">
    <text evidence="1">Homodimer.</text>
</comment>
<comment type="subcellular location">
    <subcellularLocation>
        <location evidence="1">Cytoplasm</location>
    </subcellularLocation>
</comment>
<comment type="similarity">
    <text evidence="1">Belongs to the 5DNU family.</text>
</comment>
<comment type="sequence caution" evidence="3">
    <conflict type="erroneous initiation">
        <sequence resource="EMBL-CDS" id="BAC93877"/>
    </conflict>
    <text>Extended N-terminus.</text>
</comment>
<sequence length="194" mass="22124">MQESHFFAHLARMKLIQRWPLMRSVSSENVSEHSLQVAFVAHALALIKNKKFGGHINAERVAVLAMYHDSSEVLTGDLPTPVKYYNPEIAKEYKKIEAAAEQKLLSMLPEEFQEDFRPFVISQQTSEEEAQIVKQADSICAYLKCLEELSAGNHEFALAKKRLDITLAERKTPEMDYFLNTFAPSFELSLDEIS</sequence>
<keyword id="KW-0963">Cytoplasm</keyword>
<keyword id="KW-0378">Hydrolase</keyword>
<keyword id="KW-0479">Metal-binding</keyword>
<keyword id="KW-0547">Nucleotide-binding</keyword>
<protein>
    <recommendedName>
        <fullName evidence="1">5'-deoxynucleotidase VV1113</fullName>
        <ecNumber evidence="1">3.1.3.89</ecNumber>
    </recommendedName>
    <alternativeName>
        <fullName evidence="1">5'-deoxyribonucleotidase</fullName>
    </alternativeName>
    <alternativeName>
        <fullName evidence="1">Nucleoside 5'-monophosphate phosphohydrolase</fullName>
    </alternativeName>
</protein>
<accession>Q7MMF9</accession>
<evidence type="ECO:0000255" key="1">
    <source>
        <dbReference type="HAMAP-Rule" id="MF_01100"/>
    </source>
</evidence>
<evidence type="ECO:0000255" key="2">
    <source>
        <dbReference type="PROSITE-ProRule" id="PRU01175"/>
    </source>
</evidence>
<evidence type="ECO:0000305" key="3"/>